<proteinExistence type="evidence at protein level"/>
<name>URIC2_SOYBN</name>
<accession>O04104</accession>
<organism>
    <name type="scientific">Glycine max</name>
    <name type="common">Soybean</name>
    <name type="synonym">Glycine hispida</name>
    <dbReference type="NCBI Taxonomy" id="3847"/>
    <lineage>
        <taxon>Eukaryota</taxon>
        <taxon>Viridiplantae</taxon>
        <taxon>Streptophyta</taxon>
        <taxon>Embryophyta</taxon>
        <taxon>Tracheophyta</taxon>
        <taxon>Spermatophyta</taxon>
        <taxon>Magnoliopsida</taxon>
        <taxon>eudicotyledons</taxon>
        <taxon>Gunneridae</taxon>
        <taxon>Pentapetalae</taxon>
        <taxon>rosids</taxon>
        <taxon>fabids</taxon>
        <taxon>Fabales</taxon>
        <taxon>Fabaceae</taxon>
        <taxon>Papilionoideae</taxon>
        <taxon>50 kb inversion clade</taxon>
        <taxon>NPAAA clade</taxon>
        <taxon>indigoferoid/millettioid clade</taxon>
        <taxon>Phaseoleae</taxon>
        <taxon>Glycine</taxon>
        <taxon>Glycine subgen. Soja</taxon>
    </lineage>
</organism>
<dbReference type="EC" id="1.7.3.3"/>
<dbReference type="EMBL" id="M10594">
    <property type="protein sequence ID" value="AAA33994.1"/>
    <property type="molecule type" value="Genomic_DNA"/>
</dbReference>
<dbReference type="EMBL" id="AB002807">
    <property type="protein sequence ID" value="BAA19670.1"/>
    <property type="molecule type" value="Genomic_DNA"/>
</dbReference>
<dbReference type="EMBL" id="AB002809">
    <property type="protein sequence ID" value="BAA19672.1"/>
    <property type="molecule type" value="mRNA"/>
</dbReference>
<dbReference type="RefSeq" id="NP_001235948.1">
    <property type="nucleotide sequence ID" value="NM_001249019.1"/>
</dbReference>
<dbReference type="SMR" id="O04104"/>
<dbReference type="FunCoup" id="O04104">
    <property type="interactions" value="2451"/>
</dbReference>
<dbReference type="STRING" id="3847.O04104"/>
<dbReference type="PaxDb" id="3847-GLYMA20G17440.1"/>
<dbReference type="GeneID" id="100037445"/>
<dbReference type="KEGG" id="gmx:100037445"/>
<dbReference type="eggNOG" id="KOG1599">
    <property type="taxonomic scope" value="Eukaryota"/>
</dbReference>
<dbReference type="HOGENOM" id="CLU_048151_1_1_1"/>
<dbReference type="InParanoid" id="O04104"/>
<dbReference type="OrthoDB" id="9992118at2759"/>
<dbReference type="UniPathway" id="UPA00394">
    <property type="reaction ID" value="UER00650"/>
</dbReference>
<dbReference type="Proteomes" id="UP000008827">
    <property type="component" value="Unplaced"/>
</dbReference>
<dbReference type="GO" id="GO:0005777">
    <property type="term" value="C:peroxisome"/>
    <property type="evidence" value="ECO:0000318"/>
    <property type="project" value="GO_Central"/>
</dbReference>
<dbReference type="GO" id="GO:0004846">
    <property type="term" value="F:urate oxidase activity"/>
    <property type="evidence" value="ECO:0000318"/>
    <property type="project" value="GO_Central"/>
</dbReference>
<dbReference type="GO" id="GO:0006145">
    <property type="term" value="P:purine nucleobase catabolic process"/>
    <property type="evidence" value="ECO:0000318"/>
    <property type="project" value="GO_Central"/>
</dbReference>
<dbReference type="GO" id="GO:0019628">
    <property type="term" value="P:urate catabolic process"/>
    <property type="evidence" value="ECO:0000318"/>
    <property type="project" value="GO_Central"/>
</dbReference>
<dbReference type="CDD" id="cd00445">
    <property type="entry name" value="Uricase"/>
    <property type="match status" value="1"/>
</dbReference>
<dbReference type="FunFam" id="3.10.270.10:FF:000001">
    <property type="entry name" value="Uricase"/>
    <property type="match status" value="1"/>
</dbReference>
<dbReference type="Gene3D" id="3.10.270.10">
    <property type="entry name" value="Urate Oxidase"/>
    <property type="match status" value="1"/>
</dbReference>
<dbReference type="InterPro" id="IPR002042">
    <property type="entry name" value="Uricase"/>
</dbReference>
<dbReference type="InterPro" id="IPR019842">
    <property type="entry name" value="Uricase_CS"/>
</dbReference>
<dbReference type="NCBIfam" id="TIGR03383">
    <property type="entry name" value="urate_oxi"/>
    <property type="match status" value="1"/>
</dbReference>
<dbReference type="PANTHER" id="PTHR42874">
    <property type="entry name" value="URICASE"/>
    <property type="match status" value="1"/>
</dbReference>
<dbReference type="PANTHER" id="PTHR42874:SF1">
    <property type="entry name" value="URICASE"/>
    <property type="match status" value="1"/>
</dbReference>
<dbReference type="Pfam" id="PF01014">
    <property type="entry name" value="Uricase"/>
    <property type="match status" value="2"/>
</dbReference>
<dbReference type="PIRSF" id="PIRSF000241">
    <property type="entry name" value="Urate_oxidase"/>
    <property type="match status" value="1"/>
</dbReference>
<dbReference type="PRINTS" id="PR00093">
    <property type="entry name" value="URICASE"/>
</dbReference>
<dbReference type="SUPFAM" id="SSF55620">
    <property type="entry name" value="Tetrahydrobiopterin biosynthesis enzymes-like"/>
    <property type="match status" value="2"/>
</dbReference>
<dbReference type="PROSITE" id="PS00366">
    <property type="entry name" value="URICASE"/>
    <property type="match status" value="1"/>
</dbReference>
<sequence>MAQQEVVEGFKFEQRHGKERVRVARVWKTRQGQHFVVEWRVGITLFSDCVNSYLRDDNSDIVATDTMKNTVYAKAKECSDILSAEDFAILLAKHFVSFYKKVTGAIVNIVEKPWERVIVDGQPHEHGFKLGSEKHTTEAIVQKSGSLQLTSGIEGLSVLKTTQSGFVNFIRDKYTALPDTRERILATEVTALWRYSYESQYSLPQKPLYFTEKYQEVKKVLADTFFGPPNGGVYSPSVQNTLYLMAKATLNRFPDIAYVSLKMPNLHFLPVNISNKDGPIVKFEDDVYLPTDEPHGSIQASLSRLWSKL</sequence>
<feature type="chain" id="PRO_0000166004" description="Uricase-2 isozyme 2">
    <location>
        <begin position="1"/>
        <end position="309"/>
    </location>
</feature>
<feature type="active site" description="Charge relay system" evidence="2">
    <location>
        <position position="18"/>
    </location>
</feature>
<feature type="active site" description="Charge relay system" evidence="2">
    <location>
        <position position="64"/>
    </location>
</feature>
<feature type="active site" description="Charge relay system" evidence="2">
    <location>
        <position position="267"/>
    </location>
</feature>
<feature type="binding site" evidence="3">
    <location>
        <position position="64"/>
    </location>
    <ligand>
        <name>urate</name>
        <dbReference type="ChEBI" id="CHEBI:17775"/>
    </ligand>
</feature>
<feature type="binding site" evidence="3">
    <location>
        <position position="65"/>
    </location>
    <ligand>
        <name>urate</name>
        <dbReference type="ChEBI" id="CHEBI:17775"/>
    </ligand>
</feature>
<feature type="binding site" evidence="3">
    <location>
        <position position="166"/>
    </location>
    <ligand>
        <name>urate</name>
        <dbReference type="ChEBI" id="CHEBI:17775"/>
    </ligand>
</feature>
<feature type="binding site" evidence="3">
    <location>
        <position position="183"/>
    </location>
    <ligand>
        <name>urate</name>
        <dbReference type="ChEBI" id="CHEBI:17775"/>
    </ligand>
</feature>
<feature type="binding site" evidence="3">
    <location>
        <position position="238"/>
    </location>
    <ligand>
        <name>urate</name>
        <dbReference type="ChEBI" id="CHEBI:17775"/>
    </ligand>
</feature>
<feature type="binding site" evidence="3">
    <location>
        <position position="239"/>
    </location>
    <ligand>
        <name>urate</name>
        <dbReference type="ChEBI" id="CHEBI:17775"/>
    </ligand>
</feature>
<feature type="binding site" evidence="3">
    <location>
        <position position="265"/>
    </location>
    <ligand>
        <name>urate</name>
        <dbReference type="ChEBI" id="CHEBI:17775"/>
    </ligand>
</feature>
<feature type="sequence conflict" description="In Ref. 1; AAA33994." evidence="4" ref="1">
    <original>L</original>
    <variation>F</variation>
    <location>
        <position position="208"/>
    </location>
</feature>
<reference key="1">
    <citation type="journal article" date="1985" name="Proc. Natl. Acad. Sci. U.S.A.">
        <title>Primary structure of the soybean nodulin-35 gene encoding uricase II localized in the peroxisome of uninfected cells of nodules.</title>
        <authorList>
            <person name="Nguyen T."/>
            <person name="Zelechowska M."/>
            <person name="Foster V."/>
            <person name="Bergmann H."/>
            <person name="Verma D.P.S."/>
        </authorList>
    </citation>
    <scope>NUCLEOTIDE SEQUENCE</scope>
    <scope>PROTEIN SEQUENCE OF 245-262</scope>
    <source>
        <strain>cv. Dare</strain>
    </source>
</reference>
<reference key="2">
    <citation type="journal article" date="1997" name="Mol. Plant Microbe Interact.">
        <title>Two distinct uricase II (nodulin 35) genes are differentially expressed in soybean plants.</title>
        <authorList>
            <person name="Takane K."/>
            <person name="Tajima S."/>
            <person name="Kouchi H."/>
        </authorList>
    </citation>
    <scope>NUCLEOTIDE SEQUENCE [GENOMIC DNA / MRNA]</scope>
    <source>
        <strain>cv. Akisengoku</strain>
        <tissue>Root nodule</tissue>
    </source>
</reference>
<protein>
    <recommendedName>
        <fullName>Uricase-2 isozyme 2</fullName>
        <ecNumber>1.7.3.3</ecNumber>
    </recommendedName>
    <alternativeName>
        <fullName>Nodulin 35</fullName>
        <shortName>N-35</shortName>
    </alternativeName>
    <alternativeName>
        <fullName>Non-symbiotic uricase</fullName>
    </alternativeName>
    <alternativeName>
        <fullName>Urate oxidase</fullName>
    </alternativeName>
    <alternativeName>
        <fullName>Uricase II isozyme 2</fullName>
    </alternativeName>
</protein>
<comment type="function">
    <text>Catalyzes the oxidation of uric acid to 5-hydroxyisourate, which is further processed to form (S)-allantoin.</text>
</comment>
<comment type="catalytic activity">
    <reaction>
        <text>urate + O2 + H2O = 5-hydroxyisourate + H2O2</text>
        <dbReference type="Rhea" id="RHEA:21368"/>
        <dbReference type="ChEBI" id="CHEBI:15377"/>
        <dbReference type="ChEBI" id="CHEBI:15379"/>
        <dbReference type="ChEBI" id="CHEBI:16240"/>
        <dbReference type="ChEBI" id="CHEBI:17775"/>
        <dbReference type="ChEBI" id="CHEBI:18072"/>
        <dbReference type="EC" id="1.7.3.3"/>
    </reaction>
</comment>
<comment type="pathway">
    <text>Purine metabolism; urate degradation; (S)-allantoin from urate: step 1/3.</text>
</comment>
<comment type="subunit">
    <text evidence="1">Homotetramer.</text>
</comment>
<comment type="subcellular location">
    <subcellularLocation>
        <location>Peroxisome</location>
    </subcellularLocation>
</comment>
<comment type="similarity">
    <text evidence="4">Belongs to the uricase family.</text>
</comment>
<keyword id="KW-0903">Direct protein sequencing</keyword>
<keyword id="KW-0560">Oxidoreductase</keyword>
<keyword id="KW-0576">Peroxisome</keyword>
<keyword id="KW-0659">Purine metabolism</keyword>
<keyword id="KW-1185">Reference proteome</keyword>
<evidence type="ECO:0000250" key="1"/>
<evidence type="ECO:0000250" key="2">
    <source>
        <dbReference type="UniProtKB" id="D0VWQ1"/>
    </source>
</evidence>
<evidence type="ECO:0000250" key="3">
    <source>
        <dbReference type="UniProtKB" id="Q00511"/>
    </source>
</evidence>
<evidence type="ECO:0000305" key="4"/>